<sequence length="104" mass="11859">MKLFAVFLLFCLVNQIYCRRSRSNTVEVTKKCKSGGKDTSMEKVEVEVSGSFYPTLELPDYCTHRRLDDDKCSKFCEHNCNPPFKRGVCGVWGDSQAGNCYCHT</sequence>
<comment type="function">
    <text evidence="2">Inhibits proliferation, adhesion and migration of host cells as well as host angiogenesis by blocking host integrin alpha-V/beta-3 (ITGAV:ITGB3).</text>
</comment>
<comment type="subunit">
    <text evidence="2">Interacts with host integrin alpha-V/beta-3 (ITGAV:ITGB3).</text>
</comment>
<comment type="subcellular location">
    <subcellularLocation>
        <location evidence="4">Secreted</location>
    </subcellularLocation>
</comment>
<feature type="signal peptide" evidence="1">
    <location>
        <begin position="1"/>
        <end position="18"/>
    </location>
</feature>
<feature type="chain" id="PRO_5002644017" description="Salivary protein FS145" evidence="1">
    <location>
        <begin position="19"/>
        <end position="104"/>
    </location>
</feature>
<feature type="short sequence motif" description="Putative integrin attachment site; atypical (WGD)" evidence="3">
    <location>
        <begin position="92"/>
        <end position="94"/>
    </location>
</feature>
<feature type="disulfide bond" evidence="3">
    <location>
        <begin position="32"/>
        <end position="80"/>
    </location>
</feature>
<feature type="disulfide bond" evidence="3">
    <location>
        <begin position="62"/>
        <end position="89"/>
    </location>
</feature>
<feature type="disulfide bond" evidence="3">
    <location>
        <begin position="72"/>
        <end position="100"/>
    </location>
</feature>
<feature type="disulfide bond" evidence="3">
    <location>
        <begin position="76"/>
        <end position="102"/>
    </location>
</feature>
<organism>
    <name type="scientific">Xenopsylla cheopis</name>
    <name type="common">Oriental rat flea</name>
    <name type="synonym">Pulex cheopis</name>
    <dbReference type="NCBI Taxonomy" id="163159"/>
    <lineage>
        <taxon>Eukaryota</taxon>
        <taxon>Metazoa</taxon>
        <taxon>Ecdysozoa</taxon>
        <taxon>Arthropoda</taxon>
        <taxon>Hexapoda</taxon>
        <taxon>Insecta</taxon>
        <taxon>Pterygota</taxon>
        <taxon>Neoptera</taxon>
        <taxon>Endopterygota</taxon>
        <taxon>Siphonaptera</taxon>
        <taxon>Pulicidae</taxon>
        <taxon>Xenopsyllinae</taxon>
        <taxon>Xenopsylla</taxon>
    </lineage>
</organism>
<protein>
    <recommendedName>
        <fullName evidence="3">Salivary protein FS145</fullName>
        <shortName evidence="3">FS145</shortName>
    </recommendedName>
    <alternativeName>
        <fullName evidence="3">Disintegrin</fullName>
    </alternativeName>
</protein>
<keyword id="KW-1217">Cell adhesion impairing toxin</keyword>
<keyword id="KW-1015">Disulfide bond</keyword>
<keyword id="KW-0964">Secreted</keyword>
<keyword id="KW-0732">Signal</keyword>
<keyword id="KW-0800">Toxin</keyword>
<reference evidence="5" key="1">
    <citation type="journal article" date="2007" name="BMC Genomics">
        <title>An insight into the sialome of the oriental rat flea, Xenopsylla cheopis (Rots).</title>
        <authorList>
            <person name="Andersen J.F."/>
            <person name="Hinnebusch B.J."/>
            <person name="Lucas D.A."/>
            <person name="Conrads T.P."/>
            <person name="Veenstra T.D."/>
            <person name="Pham V.M."/>
            <person name="Ribeiro J.M."/>
        </authorList>
    </citation>
    <scope>NUCLEOTIDE SEQUENCE [LARGE SCALE MRNA]</scope>
    <source>
        <tissue evidence="5">Salivary gland</tissue>
    </source>
</reference>
<reference evidence="4" key="2">
    <citation type="journal article" date="2024" name="Int. J. Biol. Macromol.">
        <title>FS145, the first flea-derived disintegrin, inhibits angiogenesis through specifically binding integrin alphavbeta3.</title>
        <authorList>
            <person name="Lu W."/>
            <person name="Xiao Z."/>
            <person name="Liao H."/>
            <person name="Xie J."/>
            <person name="Gao Y."/>
            <person name="Xiong W."/>
            <person name="Zeng Q."/>
            <person name="Deng Z."/>
            <person name="Wu J."/>
            <person name="Chai J."/>
            <person name="Chen X."/>
            <person name="Xu X."/>
        </authorList>
    </citation>
    <scope>FUNCTION</scope>
    <scope>INTERACTION WITH HOST ITGAV:ITGB3</scope>
    <scope>PREDICTED DISULFIDE BONDS</scope>
    <scope>WGD MOTIF</scope>
</reference>
<accession>A2IA78</accession>
<name>FS145_XENCH</name>
<proteinExistence type="evidence at protein level"/>
<evidence type="ECO:0000255" key="1"/>
<evidence type="ECO:0000269" key="2">
    <source>
    </source>
</evidence>
<evidence type="ECO:0000303" key="3">
    <source>
    </source>
</evidence>
<evidence type="ECO:0000305" key="4"/>
<evidence type="ECO:0000312" key="5">
    <source>
        <dbReference type="EMBL" id="ABM55398.1"/>
    </source>
</evidence>
<dbReference type="EMBL" id="EF179392">
    <property type="protein sequence ID" value="ABM55398.1"/>
    <property type="molecule type" value="mRNA"/>
</dbReference>
<dbReference type="GO" id="GO:0005576">
    <property type="term" value="C:extracellular region"/>
    <property type="evidence" value="ECO:0007669"/>
    <property type="project" value="UniProtKB-SubCell"/>
</dbReference>